<feature type="chain" id="PRO_0000096842" description="Probable NifZ protein">
    <location>
        <begin position="1"/>
        <end position="78" status="greater than"/>
    </location>
</feature>
<feature type="non-terminal residue">
    <location>
        <position position="78"/>
    </location>
</feature>
<gene>
    <name type="primary">nifZ</name>
</gene>
<accession>P17436</accession>
<dbReference type="EMBL" id="X07567">
    <property type="protein sequence ID" value="CAA30452.1"/>
    <property type="molecule type" value="Genomic_DNA"/>
</dbReference>
<dbReference type="PIR" id="S03831">
    <property type="entry name" value="S03831"/>
</dbReference>
<dbReference type="GO" id="GO:0009399">
    <property type="term" value="P:nitrogen fixation"/>
    <property type="evidence" value="ECO:0007669"/>
    <property type="project" value="UniProtKB-KW"/>
</dbReference>
<dbReference type="InterPro" id="IPR007415">
    <property type="entry name" value="Nitrogenase_MoFe_mat_NifZ"/>
</dbReference>
<dbReference type="Pfam" id="PF04319">
    <property type="entry name" value="NifZ"/>
    <property type="match status" value="1"/>
</dbReference>
<proteinExistence type="inferred from homology"/>
<keyword id="KW-0535">Nitrogen fixation</keyword>
<comment type="similarity">
    <text evidence="1">Belongs to the NifZ family.</text>
</comment>
<protein>
    <recommendedName>
        <fullName>Probable NifZ protein</fullName>
    </recommendedName>
</protein>
<organism>
    <name type="scientific">Rhodobacter capsulatus</name>
    <name type="common">Rhodopseudomonas capsulata</name>
    <dbReference type="NCBI Taxonomy" id="1061"/>
    <lineage>
        <taxon>Bacteria</taxon>
        <taxon>Pseudomonadati</taxon>
        <taxon>Pseudomonadota</taxon>
        <taxon>Alphaproteobacteria</taxon>
        <taxon>Rhodobacterales</taxon>
        <taxon>Rhodobacter group</taxon>
        <taxon>Rhodobacter</taxon>
    </lineage>
</organism>
<sequence>MSTDDREIEVYRAPVYRPGDKVIARKQVKNDGTMAGFEIGDIVVKKGDVGYVRDIGVFLSQFYIYAIDFIERGSIVGM</sequence>
<reference key="1">
    <citation type="journal article" date="1988" name="Mol. Gen. Genet.">
        <title>Genetic characterization and sequence analysis of the duplicated nifA/nifB gene region of Rhodobacter capsulatus.</title>
        <authorList>
            <person name="Masepohl P."/>
            <person name="Klipp W."/>
            <person name="Puehler A."/>
        </authorList>
    </citation>
    <scope>NUCLEOTIDE SEQUENCE [GENOMIC DNA]</scope>
</reference>
<name>NIFZ_RHOCA</name>
<evidence type="ECO:0000305" key="1"/>